<comment type="function">
    <text evidence="1 3">Functions as a response regulator involved in His-to-Asp phosphorelay signal transduction system. Phosphorylation of the Asp residue in the receiver domain activates the ability of the protein to promote the transcription of target genes. Type-A response regulators seem to act as negative regulators of the cytokinin signaling (By similarity).</text>
</comment>
<comment type="subcellular location">
    <subcellularLocation>
        <location evidence="4">Nucleus</location>
    </subcellularLocation>
</comment>
<comment type="PTM">
    <text>Two-component system major event consists of a His-to-Asp phosphorelay between a sensor histidine kinase (HK) and a response regulator (RR). In plants, the His-to-Asp phosphorelay involves an additional intermediate named Histidine-containing phosphotransfer protein (HPt). This multistep phosphorelay consists of a His-Asp-His-Asp sequential transfer of a phosphate group between first a His and an Asp of the HK protein, followed by the transfer to a conserved His of the HPt protein and finally the transfer to an Asp in the receiver domain of the RR protein.</text>
</comment>
<comment type="similarity">
    <text evidence="4">Belongs to the ARR family. Type-A subfamily.</text>
</comment>
<comment type="sequence caution" evidence="4">
    <conflict type="erroneous gene model prediction">
        <sequence resource="EMBL-CDS" id="CAB88041"/>
    </conflict>
</comment>
<dbReference type="EMBL" id="AF305722">
    <property type="protein sequence ID" value="AAG40613.1"/>
    <property type="molecule type" value="mRNA"/>
</dbReference>
<dbReference type="EMBL" id="AL163972">
    <property type="protein sequence ID" value="CAB88041.1"/>
    <property type="status" value="ALT_SEQ"/>
    <property type="molecule type" value="Genomic_DNA"/>
</dbReference>
<dbReference type="EMBL" id="CP002686">
    <property type="protein sequence ID" value="AEE79515.1"/>
    <property type="molecule type" value="Genomic_DNA"/>
</dbReference>
<dbReference type="PIR" id="T49039">
    <property type="entry name" value="T49039"/>
</dbReference>
<dbReference type="RefSeq" id="NP_567037.1">
    <property type="nucleotide sequence ID" value="NM_115496.2"/>
</dbReference>
<dbReference type="SMR" id="Q9FPR6"/>
<dbReference type="BioGRID" id="10121">
    <property type="interactions" value="4"/>
</dbReference>
<dbReference type="FunCoup" id="Q9FPR6">
    <property type="interactions" value="303"/>
</dbReference>
<dbReference type="IntAct" id="Q9FPR6">
    <property type="interactions" value="4"/>
</dbReference>
<dbReference type="STRING" id="3702.Q9FPR6"/>
<dbReference type="PaxDb" id="3702-AT3G56380.1"/>
<dbReference type="EnsemblPlants" id="AT3G56380.1">
    <property type="protein sequence ID" value="AT3G56380.1"/>
    <property type="gene ID" value="AT3G56380"/>
</dbReference>
<dbReference type="GeneID" id="824805"/>
<dbReference type="Gramene" id="AT3G56380.1">
    <property type="protein sequence ID" value="AT3G56380.1"/>
    <property type="gene ID" value="AT3G56380"/>
</dbReference>
<dbReference type="KEGG" id="ath:AT3G56380"/>
<dbReference type="Araport" id="AT3G56380"/>
<dbReference type="TAIR" id="AT3G56380">
    <property type="gene designation" value="RR17"/>
</dbReference>
<dbReference type="eggNOG" id="KOG1601">
    <property type="taxonomic scope" value="Eukaryota"/>
</dbReference>
<dbReference type="HOGENOM" id="CLU_000445_69_5_1"/>
<dbReference type="InParanoid" id="Q9FPR6"/>
<dbReference type="OMA" id="ACKENGP"/>
<dbReference type="OrthoDB" id="60033at2759"/>
<dbReference type="PhylomeDB" id="Q9FPR6"/>
<dbReference type="PRO" id="PR:Q9FPR6"/>
<dbReference type="Proteomes" id="UP000006548">
    <property type="component" value="Chromosome 3"/>
</dbReference>
<dbReference type="ExpressionAtlas" id="Q9FPR6">
    <property type="expression patterns" value="baseline and differential"/>
</dbReference>
<dbReference type="GO" id="GO:0005634">
    <property type="term" value="C:nucleus"/>
    <property type="evidence" value="ECO:0007669"/>
    <property type="project" value="UniProtKB-SubCell"/>
</dbReference>
<dbReference type="GO" id="GO:0000156">
    <property type="term" value="F:phosphorelay response regulator activity"/>
    <property type="evidence" value="ECO:0000250"/>
    <property type="project" value="TAIR"/>
</dbReference>
<dbReference type="GO" id="GO:0009736">
    <property type="term" value="P:cytokinin-activated signaling pathway"/>
    <property type="evidence" value="ECO:0000304"/>
    <property type="project" value="TAIR"/>
</dbReference>
<dbReference type="GO" id="GO:0006355">
    <property type="term" value="P:regulation of DNA-templated transcription"/>
    <property type="evidence" value="ECO:0000304"/>
    <property type="project" value="TAIR"/>
</dbReference>
<dbReference type="CDD" id="cd17581">
    <property type="entry name" value="REC_typeA_ARR"/>
    <property type="match status" value="1"/>
</dbReference>
<dbReference type="FunFam" id="3.40.50.2300:FF:000159">
    <property type="entry name" value="Two-component response regulator ORR5"/>
    <property type="match status" value="1"/>
</dbReference>
<dbReference type="Gene3D" id="3.40.50.2300">
    <property type="match status" value="1"/>
</dbReference>
<dbReference type="InterPro" id="IPR045279">
    <property type="entry name" value="ARR-like"/>
</dbReference>
<dbReference type="InterPro" id="IPR011006">
    <property type="entry name" value="CheY-like_superfamily"/>
</dbReference>
<dbReference type="InterPro" id="IPR001789">
    <property type="entry name" value="Sig_transdc_resp-reg_receiver"/>
</dbReference>
<dbReference type="PANTHER" id="PTHR43874">
    <property type="entry name" value="TWO-COMPONENT RESPONSE REGULATOR"/>
    <property type="match status" value="1"/>
</dbReference>
<dbReference type="PANTHER" id="PTHR43874:SF107">
    <property type="entry name" value="TWO-COMPONENT RESPONSE REGULATOR ARR17"/>
    <property type="match status" value="1"/>
</dbReference>
<dbReference type="Pfam" id="PF00072">
    <property type="entry name" value="Response_reg"/>
    <property type="match status" value="1"/>
</dbReference>
<dbReference type="SMART" id="SM00448">
    <property type="entry name" value="REC"/>
    <property type="match status" value="1"/>
</dbReference>
<dbReference type="SUPFAM" id="SSF52172">
    <property type="entry name" value="CheY-like"/>
    <property type="match status" value="1"/>
</dbReference>
<dbReference type="PROSITE" id="PS50110">
    <property type="entry name" value="RESPONSE_REGULATORY"/>
    <property type="match status" value="1"/>
</dbReference>
<accession>Q9FPR6</accession>
<accession>Q9LY02</accession>
<sequence>MNKGCGSGSDSCLSSMEEELHVLAVDDNLIDRKLVERILKISSCKVTTAENGLRALEYLGLGDPQQTDSLTNVMKVNLIITDYCMPGMTGFELLKKVKESSNLKEVPVVILSSENIPTRINKCLASGAQMFMQKPLKLSDVEKLKCHLLNCRS</sequence>
<protein>
    <recommendedName>
        <fullName>Two-component response regulator ARR17</fullName>
    </recommendedName>
</protein>
<feature type="chain" id="PRO_0000081433" description="Two-component response regulator ARR17">
    <location>
        <begin position="1"/>
        <end position="153"/>
    </location>
</feature>
<feature type="domain" description="Response regulatory" evidence="2">
    <location>
        <begin position="21"/>
        <end position="149"/>
    </location>
</feature>
<feature type="modified residue" description="4-aspartylphosphate" evidence="2">
    <location>
        <position position="82"/>
    </location>
</feature>
<gene>
    <name type="primary">ARR17</name>
    <name type="ordered locus">At3g56380</name>
    <name type="ORF">T5P19.30</name>
</gene>
<keyword id="KW-0932">Cytokinin signaling pathway</keyword>
<keyword id="KW-0539">Nucleus</keyword>
<keyword id="KW-0597">Phosphoprotein</keyword>
<keyword id="KW-1185">Reference proteome</keyword>
<keyword id="KW-0804">Transcription</keyword>
<keyword id="KW-0805">Transcription regulation</keyword>
<keyword id="KW-0902">Two-component regulatory system</keyword>
<evidence type="ECO:0000250" key="1"/>
<evidence type="ECO:0000255" key="2">
    <source>
        <dbReference type="PROSITE-ProRule" id="PRU00169"/>
    </source>
</evidence>
<evidence type="ECO:0000269" key="3">
    <source>
    </source>
</evidence>
<evidence type="ECO:0000305" key="4"/>
<name>ARR17_ARATH</name>
<reference key="1">
    <citation type="journal article" date="2000" name="Plant Physiol.">
        <title>Characterization of the response of the Arabidopsis response regulator gene family to cytokinin.</title>
        <authorList>
            <person name="D'Agostino I.B."/>
            <person name="Deruere J."/>
            <person name="Kieber J.J."/>
        </authorList>
    </citation>
    <scope>NUCLEOTIDE SEQUENCE</scope>
    <source>
        <strain>cv. Columbia</strain>
    </source>
</reference>
<reference key="2">
    <citation type="journal article" date="2000" name="Nature">
        <title>Sequence and analysis of chromosome 3 of the plant Arabidopsis thaliana.</title>
        <authorList>
            <person name="Salanoubat M."/>
            <person name="Lemcke K."/>
            <person name="Rieger M."/>
            <person name="Ansorge W."/>
            <person name="Unseld M."/>
            <person name="Fartmann B."/>
            <person name="Valle G."/>
            <person name="Bloecker H."/>
            <person name="Perez-Alonso M."/>
            <person name="Obermaier B."/>
            <person name="Delseny M."/>
            <person name="Boutry M."/>
            <person name="Grivell L.A."/>
            <person name="Mache R."/>
            <person name="Puigdomenech P."/>
            <person name="De Simone V."/>
            <person name="Choisne N."/>
            <person name="Artiguenave F."/>
            <person name="Robert C."/>
            <person name="Brottier P."/>
            <person name="Wincker P."/>
            <person name="Cattolico L."/>
            <person name="Weissenbach J."/>
            <person name="Saurin W."/>
            <person name="Quetier F."/>
            <person name="Schaefer M."/>
            <person name="Mueller-Auer S."/>
            <person name="Gabel C."/>
            <person name="Fuchs M."/>
            <person name="Benes V."/>
            <person name="Wurmbach E."/>
            <person name="Drzonek H."/>
            <person name="Erfle H."/>
            <person name="Jordan N."/>
            <person name="Bangert S."/>
            <person name="Wiedelmann R."/>
            <person name="Kranz H."/>
            <person name="Voss H."/>
            <person name="Holland R."/>
            <person name="Brandt P."/>
            <person name="Nyakatura G."/>
            <person name="Vezzi A."/>
            <person name="D'Angelo M."/>
            <person name="Pallavicini A."/>
            <person name="Toppo S."/>
            <person name="Simionati B."/>
            <person name="Conrad A."/>
            <person name="Hornischer K."/>
            <person name="Kauer G."/>
            <person name="Loehnert T.-H."/>
            <person name="Nordsiek G."/>
            <person name="Reichelt J."/>
            <person name="Scharfe M."/>
            <person name="Schoen O."/>
            <person name="Bargues M."/>
            <person name="Terol J."/>
            <person name="Climent J."/>
            <person name="Navarro P."/>
            <person name="Collado C."/>
            <person name="Perez-Perez A."/>
            <person name="Ottenwaelder B."/>
            <person name="Duchemin D."/>
            <person name="Cooke R."/>
            <person name="Laudie M."/>
            <person name="Berger-Llauro C."/>
            <person name="Purnelle B."/>
            <person name="Masuy D."/>
            <person name="de Haan M."/>
            <person name="Maarse A.C."/>
            <person name="Alcaraz J.-P."/>
            <person name="Cottet A."/>
            <person name="Casacuberta E."/>
            <person name="Monfort A."/>
            <person name="Argiriou A."/>
            <person name="Flores M."/>
            <person name="Liguori R."/>
            <person name="Vitale D."/>
            <person name="Mannhaupt G."/>
            <person name="Haase D."/>
            <person name="Schoof H."/>
            <person name="Rudd S."/>
            <person name="Zaccaria P."/>
            <person name="Mewes H.-W."/>
            <person name="Mayer K.F.X."/>
            <person name="Kaul S."/>
            <person name="Town C.D."/>
            <person name="Koo H.L."/>
            <person name="Tallon L.J."/>
            <person name="Jenkins J."/>
            <person name="Rooney T."/>
            <person name="Rizzo M."/>
            <person name="Walts A."/>
            <person name="Utterback T."/>
            <person name="Fujii C.Y."/>
            <person name="Shea T.P."/>
            <person name="Creasy T.H."/>
            <person name="Haas B."/>
            <person name="Maiti R."/>
            <person name="Wu D."/>
            <person name="Peterson J."/>
            <person name="Van Aken S."/>
            <person name="Pai G."/>
            <person name="Militscher J."/>
            <person name="Sellers P."/>
            <person name="Gill J.E."/>
            <person name="Feldblyum T.V."/>
            <person name="Preuss D."/>
            <person name="Lin X."/>
            <person name="Nierman W.C."/>
            <person name="Salzberg S.L."/>
            <person name="White O."/>
            <person name="Venter J.C."/>
            <person name="Fraser C.M."/>
            <person name="Kaneko T."/>
            <person name="Nakamura Y."/>
            <person name="Sato S."/>
            <person name="Kato T."/>
            <person name="Asamizu E."/>
            <person name="Sasamoto S."/>
            <person name="Kimura T."/>
            <person name="Idesawa K."/>
            <person name="Kawashima K."/>
            <person name="Kishida Y."/>
            <person name="Kiyokawa C."/>
            <person name="Kohara M."/>
            <person name="Matsumoto M."/>
            <person name="Matsuno A."/>
            <person name="Muraki A."/>
            <person name="Nakayama S."/>
            <person name="Nakazaki N."/>
            <person name="Shinpo S."/>
            <person name="Takeuchi C."/>
            <person name="Wada T."/>
            <person name="Watanabe A."/>
            <person name="Yamada M."/>
            <person name="Yasuda M."/>
            <person name="Tabata S."/>
        </authorList>
    </citation>
    <scope>NUCLEOTIDE SEQUENCE [LARGE SCALE GENOMIC DNA]</scope>
    <source>
        <strain>cv. Columbia</strain>
    </source>
</reference>
<reference key="3">
    <citation type="journal article" date="2017" name="Plant J.">
        <title>Araport11: a complete reannotation of the Arabidopsis thaliana reference genome.</title>
        <authorList>
            <person name="Cheng C.Y."/>
            <person name="Krishnakumar V."/>
            <person name="Chan A.P."/>
            <person name="Thibaud-Nissen F."/>
            <person name="Schobel S."/>
            <person name="Town C.D."/>
        </authorList>
    </citation>
    <scope>GENOME REANNOTATION</scope>
    <source>
        <strain>cv. Columbia</strain>
    </source>
</reference>
<reference key="4">
    <citation type="journal article" date="2004" name="Plant Cell">
        <title>Type-A Arabidopsis response regulators are partially redundant negative regulators of cytokinin signaling.</title>
        <authorList>
            <person name="To J.P.C."/>
            <person name="Haberer G."/>
            <person name="Ferreira F.J."/>
            <person name="Deruere J."/>
            <person name="Mason M.G."/>
            <person name="Schaller G.E."/>
            <person name="Alonso J.M."/>
            <person name="Ecker J.R."/>
            <person name="Kieber J.J."/>
        </authorList>
    </citation>
    <scope>FUNCTION</scope>
</reference>
<organism>
    <name type="scientific">Arabidopsis thaliana</name>
    <name type="common">Mouse-ear cress</name>
    <dbReference type="NCBI Taxonomy" id="3702"/>
    <lineage>
        <taxon>Eukaryota</taxon>
        <taxon>Viridiplantae</taxon>
        <taxon>Streptophyta</taxon>
        <taxon>Embryophyta</taxon>
        <taxon>Tracheophyta</taxon>
        <taxon>Spermatophyta</taxon>
        <taxon>Magnoliopsida</taxon>
        <taxon>eudicotyledons</taxon>
        <taxon>Gunneridae</taxon>
        <taxon>Pentapetalae</taxon>
        <taxon>rosids</taxon>
        <taxon>malvids</taxon>
        <taxon>Brassicales</taxon>
        <taxon>Brassicaceae</taxon>
        <taxon>Camelineae</taxon>
        <taxon>Arabidopsis</taxon>
    </lineage>
</organism>
<proteinExistence type="evidence at transcript level"/>